<reference key="1">
    <citation type="journal article" date="2007" name="BMC Plant Biol.">
        <title>Complete plastid genome sequences suggest strong selection for retention of photosynthetic genes in the parasitic plant genus Cuscuta.</title>
        <authorList>
            <person name="McNeal J.R."/>
            <person name="Kuehl J.V."/>
            <person name="Boore J.L."/>
            <person name="dePamphilis C.W."/>
        </authorList>
    </citation>
    <scope>NUCLEOTIDE SEQUENCE [LARGE SCALE GENOMIC DNA]</scope>
</reference>
<dbReference type="EMBL" id="EU189132">
    <property type="protein sequence ID" value="ABW83696.1"/>
    <property type="molecule type" value="Genomic_DNA"/>
</dbReference>
<dbReference type="RefSeq" id="YP_001542532.1">
    <property type="nucleotide sequence ID" value="NC_009963.1"/>
</dbReference>
<dbReference type="SMR" id="A8W3C5"/>
<dbReference type="GeneID" id="5729621"/>
<dbReference type="GO" id="GO:0042170">
    <property type="term" value="C:plastid membrane"/>
    <property type="evidence" value="ECO:0007669"/>
    <property type="project" value="UniProtKB-SubCell"/>
</dbReference>
<dbReference type="GO" id="GO:0042651">
    <property type="term" value="C:thylakoid membrane"/>
    <property type="evidence" value="ECO:0007669"/>
    <property type="project" value="UniProtKB-UniRule"/>
</dbReference>
<dbReference type="GO" id="GO:0015979">
    <property type="term" value="P:photosynthesis"/>
    <property type="evidence" value="ECO:0007669"/>
    <property type="project" value="UniProtKB-UniRule"/>
</dbReference>
<dbReference type="FunFam" id="1.25.40.10:FF:000004">
    <property type="entry name" value="Photosystem I assembly protein Ycf3"/>
    <property type="match status" value="1"/>
</dbReference>
<dbReference type="Gene3D" id="1.25.40.10">
    <property type="entry name" value="Tetratricopeptide repeat domain"/>
    <property type="match status" value="1"/>
</dbReference>
<dbReference type="HAMAP" id="MF_00439">
    <property type="entry name" value="Ycf3"/>
    <property type="match status" value="1"/>
</dbReference>
<dbReference type="InterPro" id="IPR022818">
    <property type="entry name" value="PSI_Ycf3_assembly"/>
</dbReference>
<dbReference type="InterPro" id="IPR011990">
    <property type="entry name" value="TPR-like_helical_dom_sf"/>
</dbReference>
<dbReference type="InterPro" id="IPR019734">
    <property type="entry name" value="TPR_rpt"/>
</dbReference>
<dbReference type="InterPro" id="IPR051685">
    <property type="entry name" value="Ycf3/AcsC/BcsC/TPR_MFPF"/>
</dbReference>
<dbReference type="NCBIfam" id="NF002725">
    <property type="entry name" value="PRK02603.1"/>
    <property type="match status" value="1"/>
</dbReference>
<dbReference type="PANTHER" id="PTHR44943">
    <property type="entry name" value="CELLULOSE SYNTHASE OPERON PROTEIN C"/>
    <property type="match status" value="1"/>
</dbReference>
<dbReference type="PANTHER" id="PTHR44943:SF8">
    <property type="entry name" value="TPR REPEAT-CONTAINING PROTEIN MJ0263"/>
    <property type="match status" value="1"/>
</dbReference>
<dbReference type="Pfam" id="PF00515">
    <property type="entry name" value="TPR_1"/>
    <property type="match status" value="1"/>
</dbReference>
<dbReference type="SMART" id="SM00028">
    <property type="entry name" value="TPR"/>
    <property type="match status" value="3"/>
</dbReference>
<dbReference type="SUPFAM" id="SSF48452">
    <property type="entry name" value="TPR-like"/>
    <property type="match status" value="1"/>
</dbReference>
<dbReference type="PROSITE" id="PS50005">
    <property type="entry name" value="TPR"/>
    <property type="match status" value="3"/>
</dbReference>
<dbReference type="PROSITE" id="PS50293">
    <property type="entry name" value="TPR_REGION"/>
    <property type="match status" value="2"/>
</dbReference>
<comment type="function">
    <text evidence="1">Essential for the assembly of the photosystem I (PSI) complex. May act as a chaperone-like factor to guide the assembly of the PSI subunits.</text>
</comment>
<comment type="subcellular location">
    <subcellularLocation>
        <location evidence="2">Plastid membrane</location>
        <topology evidence="1">Peripheral membrane protein</topology>
    </subcellularLocation>
</comment>
<comment type="similarity">
    <text evidence="1">Belongs to the Ycf3 family.</text>
</comment>
<comment type="caution">
    <text evidence="2">Young tissue from this organism is photosynthetic and contains some thylakoids, although the photosynthetic activity does not exceed the light compensation point.</text>
</comment>
<evidence type="ECO:0000255" key="1">
    <source>
        <dbReference type="HAMAP-Rule" id="MF_00439"/>
    </source>
</evidence>
<evidence type="ECO:0000305" key="2"/>
<sequence>MSRSRINGNFLDKTFSIVANILLRIIPTTSGEKEAFTYYRDGMSAQSEGNYAEALQNYYEAMRLEIDPYDRSYILYNIGLIHTSNGEHMKALEYYFRALERNPFLPQAFNNMAVICHYRGEKAIQQGDSEIAEAWFDQAAEYWKQALALTPGNYIEAHNWLKITGRFD</sequence>
<geneLocation type="plastid"/>
<organism>
    <name type="scientific">Cuscuta exaltata</name>
    <name type="common">Tall dodder</name>
    <dbReference type="NCBI Taxonomy" id="476139"/>
    <lineage>
        <taxon>Eukaryota</taxon>
        <taxon>Viridiplantae</taxon>
        <taxon>Streptophyta</taxon>
        <taxon>Embryophyta</taxon>
        <taxon>Tracheophyta</taxon>
        <taxon>Spermatophyta</taxon>
        <taxon>Magnoliopsida</taxon>
        <taxon>eudicotyledons</taxon>
        <taxon>Gunneridae</taxon>
        <taxon>Pentapetalae</taxon>
        <taxon>asterids</taxon>
        <taxon>lamiids</taxon>
        <taxon>Solanales</taxon>
        <taxon>Convolvulaceae</taxon>
        <taxon>Cuscuteae</taxon>
        <taxon>Cuscuta</taxon>
        <taxon>Cuscuta subgen. Monogynella</taxon>
    </lineage>
</organism>
<proteinExistence type="inferred from homology"/>
<feature type="chain" id="PRO_0000325056" description="Photosystem I assembly protein Ycf3">
    <location>
        <begin position="1"/>
        <end position="168"/>
    </location>
</feature>
<feature type="repeat" description="TPR 1">
    <location>
        <begin position="35"/>
        <end position="68"/>
    </location>
</feature>
<feature type="repeat" description="TPR 2">
    <location>
        <begin position="72"/>
        <end position="105"/>
    </location>
</feature>
<feature type="repeat" description="TPR 3">
    <location>
        <begin position="120"/>
        <end position="153"/>
    </location>
</feature>
<accession>A8W3C5</accession>
<protein>
    <recommendedName>
        <fullName evidence="1">Photosystem I assembly protein Ycf3</fullName>
    </recommendedName>
</protein>
<keyword id="KW-0472">Membrane</keyword>
<keyword id="KW-0602">Photosynthesis</keyword>
<keyword id="KW-0934">Plastid</keyword>
<keyword id="KW-0677">Repeat</keyword>
<keyword id="KW-0802">TPR repeat</keyword>
<gene>
    <name evidence="1" type="primary">ycf3</name>
</gene>
<name>YCF3_CUSEX</name>